<organism>
    <name type="scientific">Methanosphaerula palustris (strain ATCC BAA-1556 / DSM 19958 / E1-9c)</name>
    <dbReference type="NCBI Taxonomy" id="521011"/>
    <lineage>
        <taxon>Archaea</taxon>
        <taxon>Methanobacteriati</taxon>
        <taxon>Methanobacteriota</taxon>
        <taxon>Stenosarchaea group</taxon>
        <taxon>Methanomicrobia</taxon>
        <taxon>Methanomicrobiales</taxon>
        <taxon>Methanoregulaceae</taxon>
        <taxon>Methanosphaerula</taxon>
    </lineage>
</organism>
<evidence type="ECO:0000255" key="1">
    <source>
        <dbReference type="HAMAP-Rule" id="MF_01224"/>
    </source>
</evidence>
<name>MOAC_METPE</name>
<proteinExistence type="inferred from homology"/>
<gene>
    <name evidence="1" type="primary">moaC</name>
    <name type="ordered locus">Mpal_2530</name>
</gene>
<feature type="chain" id="PRO_1000164896" description="Probable cyclic pyranopterin monophosphate synthase">
    <location>
        <begin position="1"/>
        <end position="154"/>
    </location>
</feature>
<feature type="active site" evidence="1">
    <location>
        <position position="125"/>
    </location>
</feature>
<feature type="binding site" evidence="1">
    <location>
        <begin position="74"/>
        <end position="76"/>
    </location>
    <ligand>
        <name>substrate</name>
    </ligand>
</feature>
<feature type="binding site" evidence="1">
    <location>
        <begin position="110"/>
        <end position="111"/>
    </location>
    <ligand>
        <name>substrate</name>
    </ligand>
</feature>
<reference key="1">
    <citation type="journal article" date="2015" name="Genome Announc.">
        <title>Complete Genome Sequence of Methanosphaerula palustris E1-9CT, a Hydrogenotrophic Methanogen Isolated from a Minerotrophic Fen Peatland.</title>
        <authorList>
            <person name="Cadillo-Quiroz H."/>
            <person name="Browne P."/>
            <person name="Kyrpides N."/>
            <person name="Woyke T."/>
            <person name="Goodwin L."/>
            <person name="Detter C."/>
            <person name="Yavitt J.B."/>
            <person name="Zinder S.H."/>
        </authorList>
    </citation>
    <scope>NUCLEOTIDE SEQUENCE [LARGE SCALE GENOMIC DNA]</scope>
    <source>
        <strain>ATCC BAA-1556 / DSM 19958 / E1-9c</strain>
    </source>
</reference>
<protein>
    <recommendedName>
        <fullName evidence="1">Probable cyclic pyranopterin monophosphate synthase</fullName>
        <ecNumber evidence="1">4.6.1.17</ecNumber>
    </recommendedName>
    <alternativeName>
        <fullName evidence="1">Molybdenum cofactor biosynthesis protein C</fullName>
    </alternativeName>
</protein>
<keyword id="KW-0456">Lyase</keyword>
<keyword id="KW-0501">Molybdenum cofactor biosynthesis</keyword>
<keyword id="KW-1185">Reference proteome</keyword>
<comment type="function">
    <text evidence="1">Catalyzes the conversion of (8S)-3',8-cyclo-7,8-dihydroguanosine 5'-triphosphate to cyclic pyranopterin monophosphate (cPMP).</text>
</comment>
<comment type="catalytic activity">
    <reaction evidence="1">
        <text>(8S)-3',8-cyclo-7,8-dihydroguanosine 5'-triphosphate = cyclic pyranopterin phosphate + diphosphate</text>
        <dbReference type="Rhea" id="RHEA:49580"/>
        <dbReference type="ChEBI" id="CHEBI:33019"/>
        <dbReference type="ChEBI" id="CHEBI:59648"/>
        <dbReference type="ChEBI" id="CHEBI:131766"/>
        <dbReference type="EC" id="4.6.1.17"/>
    </reaction>
</comment>
<comment type="pathway">
    <text evidence="1">Cofactor biosynthesis; molybdopterin biosynthesis.</text>
</comment>
<comment type="subunit">
    <text evidence="1">Homohexamer; trimer of dimers.</text>
</comment>
<comment type="similarity">
    <text evidence="1">Belongs to the MoaC family.</text>
</comment>
<sequence>MPEFTHINGDKVQMVDITAKGEVKRMARAEGTITLRSDTVAAIRTGTVLKGNVLATARIAATLAVKQTPQLIPLCHQIPIGAITVDFTDTEVSITAEVTVTSYGRTGVEMEALTGVSVALLTIWDMVKSAEKDENGQYPVTGISDIRVIEKIKG</sequence>
<accession>B8GEZ7</accession>
<dbReference type="EC" id="4.6.1.17" evidence="1"/>
<dbReference type="EMBL" id="CP001338">
    <property type="protein sequence ID" value="ACL17803.1"/>
    <property type="molecule type" value="Genomic_DNA"/>
</dbReference>
<dbReference type="RefSeq" id="WP_012619122.1">
    <property type="nucleotide sequence ID" value="NC_011832.1"/>
</dbReference>
<dbReference type="SMR" id="B8GEZ7"/>
<dbReference type="STRING" id="521011.Mpal_2530"/>
<dbReference type="GeneID" id="7271699"/>
<dbReference type="KEGG" id="mpl:Mpal_2530"/>
<dbReference type="eggNOG" id="arCOG01530">
    <property type="taxonomic scope" value="Archaea"/>
</dbReference>
<dbReference type="HOGENOM" id="CLU_074693_1_2_2"/>
<dbReference type="OrthoDB" id="10067at2157"/>
<dbReference type="UniPathway" id="UPA00344"/>
<dbReference type="Proteomes" id="UP000002457">
    <property type="component" value="Chromosome"/>
</dbReference>
<dbReference type="GO" id="GO:0061799">
    <property type="term" value="F:cyclic pyranopterin monophosphate synthase activity"/>
    <property type="evidence" value="ECO:0007669"/>
    <property type="project" value="UniProtKB-UniRule"/>
</dbReference>
<dbReference type="GO" id="GO:0006777">
    <property type="term" value="P:Mo-molybdopterin cofactor biosynthetic process"/>
    <property type="evidence" value="ECO:0007669"/>
    <property type="project" value="UniProtKB-UniRule"/>
</dbReference>
<dbReference type="CDD" id="cd01419">
    <property type="entry name" value="MoaC_A"/>
    <property type="match status" value="1"/>
</dbReference>
<dbReference type="Gene3D" id="3.30.70.640">
    <property type="entry name" value="Molybdopterin cofactor biosynthesis C (MoaC) domain"/>
    <property type="match status" value="1"/>
</dbReference>
<dbReference type="HAMAP" id="MF_01224_A">
    <property type="entry name" value="MoaC_A"/>
    <property type="match status" value="1"/>
</dbReference>
<dbReference type="InterPro" id="IPR023047">
    <property type="entry name" value="Mo_CF_biosynth-C_arc"/>
</dbReference>
<dbReference type="InterPro" id="IPR023045">
    <property type="entry name" value="MoaC"/>
</dbReference>
<dbReference type="InterPro" id="IPR036522">
    <property type="entry name" value="MoaC_sf"/>
</dbReference>
<dbReference type="InterPro" id="IPR002820">
    <property type="entry name" value="Mopterin_CF_biosynth-C_dom"/>
</dbReference>
<dbReference type="NCBIfam" id="TIGR00581">
    <property type="entry name" value="moaC"/>
    <property type="match status" value="1"/>
</dbReference>
<dbReference type="NCBIfam" id="NF008999">
    <property type="entry name" value="PRK12343.1"/>
    <property type="match status" value="1"/>
</dbReference>
<dbReference type="Pfam" id="PF01967">
    <property type="entry name" value="MoaC"/>
    <property type="match status" value="1"/>
</dbReference>
<dbReference type="SUPFAM" id="SSF55040">
    <property type="entry name" value="Molybdenum cofactor biosynthesis protein C, MoaC"/>
    <property type="match status" value="1"/>
</dbReference>